<comment type="function">
    <text evidence="1">General inhibitor of pancreatic serine proteases: inhibits chymotrypsin, trypsin, elastases, factor X, kallikrein as well as a variety of other proteases.</text>
</comment>
<comment type="subunit">
    <text evidence="1">Homodimer.</text>
</comment>
<comment type="subcellular location">
    <subcellularLocation>
        <location evidence="1">Periplasm</location>
    </subcellularLocation>
</comment>
<comment type="similarity">
    <text evidence="1">Belongs to the protease inhibitor I11 (ecotin) family.</text>
</comment>
<gene>
    <name evidence="1" type="primary">eco</name>
    <name type="ordered locus">STY2488</name>
    <name type="ordered locus">t0602</name>
</gene>
<organism>
    <name type="scientific">Salmonella typhi</name>
    <dbReference type="NCBI Taxonomy" id="90370"/>
    <lineage>
        <taxon>Bacteria</taxon>
        <taxon>Pseudomonadati</taxon>
        <taxon>Pseudomonadota</taxon>
        <taxon>Gammaproteobacteria</taxon>
        <taxon>Enterobacterales</taxon>
        <taxon>Enterobacteriaceae</taxon>
        <taxon>Salmonella</taxon>
    </lineage>
</organism>
<accession>Q8Z568</accession>
<sequence>MKMFVPAVVFAALASASAWANNGDTAQPLEKIAPYPQAEKGMKRQVITLTPQQDESTLKVELLIGQTLNVDCNQHRLGGTLETKTLEGWGYDYYVFDNVTSPVSTMMACPEGKKEQKFVTAWLGEDGMLRYNSKLPIVVYTPANVDVKYRIWKADANVQNAIAR</sequence>
<dbReference type="EMBL" id="AL513382">
    <property type="protein sequence ID" value="CAD07494.1"/>
    <property type="molecule type" value="Genomic_DNA"/>
</dbReference>
<dbReference type="EMBL" id="AE014613">
    <property type="protein sequence ID" value="AAO68307.1"/>
    <property type="molecule type" value="Genomic_DNA"/>
</dbReference>
<dbReference type="RefSeq" id="NP_456807.1">
    <property type="nucleotide sequence ID" value="NC_003198.1"/>
</dbReference>
<dbReference type="RefSeq" id="WP_001764187.1">
    <property type="nucleotide sequence ID" value="NZ_WSUR01000051.1"/>
</dbReference>
<dbReference type="SMR" id="Q8Z568"/>
<dbReference type="STRING" id="220341.gene:17586390"/>
<dbReference type="MEROPS" id="I11.001"/>
<dbReference type="KEGG" id="stt:t0602"/>
<dbReference type="KEGG" id="sty:STY2488"/>
<dbReference type="PATRIC" id="fig|220341.7.peg.2520"/>
<dbReference type="eggNOG" id="COG4574">
    <property type="taxonomic scope" value="Bacteria"/>
</dbReference>
<dbReference type="HOGENOM" id="CLU_111565_0_0_6"/>
<dbReference type="OMA" id="PKAEKGM"/>
<dbReference type="OrthoDB" id="997196at2"/>
<dbReference type="Proteomes" id="UP000000541">
    <property type="component" value="Chromosome"/>
</dbReference>
<dbReference type="Proteomes" id="UP000002670">
    <property type="component" value="Chromosome"/>
</dbReference>
<dbReference type="GO" id="GO:0042597">
    <property type="term" value="C:periplasmic space"/>
    <property type="evidence" value="ECO:0007669"/>
    <property type="project" value="UniProtKB-SubCell"/>
</dbReference>
<dbReference type="GO" id="GO:0004867">
    <property type="term" value="F:serine-type endopeptidase inhibitor activity"/>
    <property type="evidence" value="ECO:0007669"/>
    <property type="project" value="UniProtKB-UniRule"/>
</dbReference>
<dbReference type="CDD" id="cd00242">
    <property type="entry name" value="Ecotin"/>
    <property type="match status" value="1"/>
</dbReference>
<dbReference type="FunFam" id="2.60.40.550:FF:000001">
    <property type="entry name" value="Ecotin"/>
    <property type="match status" value="1"/>
</dbReference>
<dbReference type="FunFam" id="4.10.1230.10:FF:000001">
    <property type="entry name" value="Ecotin"/>
    <property type="match status" value="1"/>
</dbReference>
<dbReference type="Gene3D" id="2.60.40.550">
    <property type="entry name" value="Ecotin"/>
    <property type="match status" value="1"/>
</dbReference>
<dbReference type="Gene3D" id="4.10.1230.10">
    <property type="entry name" value="Ecotin, trypsin inhibitor"/>
    <property type="match status" value="1"/>
</dbReference>
<dbReference type="HAMAP" id="MF_00706">
    <property type="entry name" value="Ecotin"/>
    <property type="match status" value="1"/>
</dbReference>
<dbReference type="InterPro" id="IPR027438">
    <property type="entry name" value="Ecotin_C"/>
</dbReference>
<dbReference type="InterPro" id="IPR036198">
    <property type="entry name" value="Ecotin_sf"/>
</dbReference>
<dbReference type="InterPro" id="IPR005658">
    <property type="entry name" value="Prot_inh_ecotin"/>
</dbReference>
<dbReference type="InterPro" id="IPR023084">
    <property type="entry name" value="Prot_inh_ecotin_gammaproteobac"/>
</dbReference>
<dbReference type="NCBIfam" id="NF002987">
    <property type="entry name" value="PRK03719.1"/>
    <property type="match status" value="1"/>
</dbReference>
<dbReference type="PANTHER" id="PTHR35890">
    <property type="match status" value="1"/>
</dbReference>
<dbReference type="PANTHER" id="PTHR35890:SF3">
    <property type="entry name" value="ECOTIN"/>
    <property type="match status" value="1"/>
</dbReference>
<dbReference type="Pfam" id="PF03974">
    <property type="entry name" value="Ecotin"/>
    <property type="match status" value="1"/>
</dbReference>
<dbReference type="PIRSF" id="PIRSF006865">
    <property type="entry name" value="Prot_inh_ecotin"/>
    <property type="match status" value="1"/>
</dbReference>
<dbReference type="SUPFAM" id="SSF49772">
    <property type="entry name" value="Ecotin, trypsin inhibitor"/>
    <property type="match status" value="1"/>
</dbReference>
<reference key="1">
    <citation type="journal article" date="2001" name="Nature">
        <title>Complete genome sequence of a multiple drug resistant Salmonella enterica serovar Typhi CT18.</title>
        <authorList>
            <person name="Parkhill J."/>
            <person name="Dougan G."/>
            <person name="James K.D."/>
            <person name="Thomson N.R."/>
            <person name="Pickard D."/>
            <person name="Wain J."/>
            <person name="Churcher C.M."/>
            <person name="Mungall K.L."/>
            <person name="Bentley S.D."/>
            <person name="Holden M.T.G."/>
            <person name="Sebaihia M."/>
            <person name="Baker S."/>
            <person name="Basham D."/>
            <person name="Brooks K."/>
            <person name="Chillingworth T."/>
            <person name="Connerton P."/>
            <person name="Cronin A."/>
            <person name="Davis P."/>
            <person name="Davies R.M."/>
            <person name="Dowd L."/>
            <person name="White N."/>
            <person name="Farrar J."/>
            <person name="Feltwell T."/>
            <person name="Hamlin N."/>
            <person name="Haque A."/>
            <person name="Hien T.T."/>
            <person name="Holroyd S."/>
            <person name="Jagels K."/>
            <person name="Krogh A."/>
            <person name="Larsen T.S."/>
            <person name="Leather S."/>
            <person name="Moule S."/>
            <person name="O'Gaora P."/>
            <person name="Parry C."/>
            <person name="Quail M.A."/>
            <person name="Rutherford K.M."/>
            <person name="Simmonds M."/>
            <person name="Skelton J."/>
            <person name="Stevens K."/>
            <person name="Whitehead S."/>
            <person name="Barrell B.G."/>
        </authorList>
    </citation>
    <scope>NUCLEOTIDE SEQUENCE [LARGE SCALE GENOMIC DNA]</scope>
    <source>
        <strain>CT18</strain>
    </source>
</reference>
<reference key="2">
    <citation type="journal article" date="2003" name="J. Bacteriol.">
        <title>Comparative genomics of Salmonella enterica serovar Typhi strains Ty2 and CT18.</title>
        <authorList>
            <person name="Deng W."/>
            <person name="Liou S.-R."/>
            <person name="Plunkett G. III"/>
            <person name="Mayhew G.F."/>
            <person name="Rose D.J."/>
            <person name="Burland V."/>
            <person name="Kodoyianni V."/>
            <person name="Schwartz D.C."/>
            <person name="Blattner F.R."/>
        </authorList>
    </citation>
    <scope>NUCLEOTIDE SEQUENCE [LARGE SCALE GENOMIC DNA]</scope>
    <source>
        <strain>ATCC 700931 / Ty2</strain>
    </source>
</reference>
<protein>
    <recommendedName>
        <fullName evidence="1">Ecotin</fullName>
    </recommendedName>
</protein>
<keyword id="KW-1015">Disulfide bond</keyword>
<keyword id="KW-0574">Periplasm</keyword>
<keyword id="KW-0646">Protease inhibitor</keyword>
<keyword id="KW-0722">Serine protease inhibitor</keyword>
<keyword id="KW-0732">Signal</keyword>
<feature type="signal peptide" evidence="1">
    <location>
        <begin position="1"/>
        <end position="20"/>
    </location>
</feature>
<feature type="chain" id="PRO_0000007430" description="Ecotin">
    <location>
        <begin position="21"/>
        <end position="164"/>
    </location>
</feature>
<feature type="site" description="Reactive bond" evidence="1">
    <location>
        <begin position="106"/>
        <end position="107"/>
    </location>
</feature>
<feature type="disulfide bond" evidence="1">
    <location>
        <begin position="72"/>
        <end position="109"/>
    </location>
</feature>
<evidence type="ECO:0000255" key="1">
    <source>
        <dbReference type="HAMAP-Rule" id="MF_00706"/>
    </source>
</evidence>
<proteinExistence type="inferred from homology"/>
<name>ECOT_SALTI</name>